<organism>
    <name type="scientific">Homo sapiens</name>
    <name type="common">Human</name>
    <dbReference type="NCBI Taxonomy" id="9606"/>
    <lineage>
        <taxon>Eukaryota</taxon>
        <taxon>Metazoa</taxon>
        <taxon>Chordata</taxon>
        <taxon>Craniata</taxon>
        <taxon>Vertebrata</taxon>
        <taxon>Euteleostomi</taxon>
        <taxon>Mammalia</taxon>
        <taxon>Eutheria</taxon>
        <taxon>Euarchontoglires</taxon>
        <taxon>Primates</taxon>
        <taxon>Haplorrhini</taxon>
        <taxon>Catarrhini</taxon>
        <taxon>Hominidae</taxon>
        <taxon>Homo</taxon>
    </lineage>
</organism>
<reference evidence="15 16" key="1">
    <citation type="journal article" date="1998" name="Proc. Natl. Acad. Sci. U.S.A.">
        <title>The hereditary renal cell carcinoma 3;8 translocation fuses FHIT to a patched-related gene, TRC8.</title>
        <authorList>
            <person name="Gemmill R.M."/>
            <person name="West J.D."/>
            <person name="Boldog F."/>
            <person name="Tanaka N."/>
            <person name="Robinson L.J."/>
            <person name="Smith D.I."/>
            <person name="Li F."/>
            <person name="Drabkin H.A."/>
        </authorList>
    </citation>
    <scope>NUCLEOTIDE SEQUENCE [MRNA]</scope>
    <scope>NUCLEOTIDE SEQUENCE [GENOMIC DNA] OF 1-60</scope>
    <scope>TISSUE SPECIFICITY</scope>
    <scope>CHROMOSOMAL TRANSLOCATION WITH FHIT</scope>
</reference>
<reference key="2">
    <citation type="journal article" date="2004" name="Nat. Genet.">
        <title>Complete sequencing and characterization of 21,243 full-length human cDNAs.</title>
        <authorList>
            <person name="Ota T."/>
            <person name="Suzuki Y."/>
            <person name="Nishikawa T."/>
            <person name="Otsuki T."/>
            <person name="Sugiyama T."/>
            <person name="Irie R."/>
            <person name="Wakamatsu A."/>
            <person name="Hayashi K."/>
            <person name="Sato H."/>
            <person name="Nagai K."/>
            <person name="Kimura K."/>
            <person name="Makita H."/>
            <person name="Sekine M."/>
            <person name="Obayashi M."/>
            <person name="Nishi T."/>
            <person name="Shibahara T."/>
            <person name="Tanaka T."/>
            <person name="Ishii S."/>
            <person name="Yamamoto J."/>
            <person name="Saito K."/>
            <person name="Kawai Y."/>
            <person name="Isono Y."/>
            <person name="Nakamura Y."/>
            <person name="Nagahari K."/>
            <person name="Murakami K."/>
            <person name="Yasuda T."/>
            <person name="Iwayanagi T."/>
            <person name="Wagatsuma M."/>
            <person name="Shiratori A."/>
            <person name="Sudo H."/>
            <person name="Hosoiri T."/>
            <person name="Kaku Y."/>
            <person name="Kodaira H."/>
            <person name="Kondo H."/>
            <person name="Sugawara M."/>
            <person name="Takahashi M."/>
            <person name="Kanda K."/>
            <person name="Yokoi T."/>
            <person name="Furuya T."/>
            <person name="Kikkawa E."/>
            <person name="Omura Y."/>
            <person name="Abe K."/>
            <person name="Kamihara K."/>
            <person name="Katsuta N."/>
            <person name="Sato K."/>
            <person name="Tanikawa M."/>
            <person name="Yamazaki M."/>
            <person name="Ninomiya K."/>
            <person name="Ishibashi T."/>
            <person name="Yamashita H."/>
            <person name="Murakawa K."/>
            <person name="Fujimori K."/>
            <person name="Tanai H."/>
            <person name="Kimata M."/>
            <person name="Watanabe M."/>
            <person name="Hiraoka S."/>
            <person name="Chiba Y."/>
            <person name="Ishida S."/>
            <person name="Ono Y."/>
            <person name="Takiguchi S."/>
            <person name="Watanabe S."/>
            <person name="Yosida M."/>
            <person name="Hotuta T."/>
            <person name="Kusano J."/>
            <person name="Kanehori K."/>
            <person name="Takahashi-Fujii A."/>
            <person name="Hara H."/>
            <person name="Tanase T.-O."/>
            <person name="Nomura Y."/>
            <person name="Togiya S."/>
            <person name="Komai F."/>
            <person name="Hara R."/>
            <person name="Takeuchi K."/>
            <person name="Arita M."/>
            <person name="Imose N."/>
            <person name="Musashino K."/>
            <person name="Yuuki H."/>
            <person name="Oshima A."/>
            <person name="Sasaki N."/>
            <person name="Aotsuka S."/>
            <person name="Yoshikawa Y."/>
            <person name="Matsunawa H."/>
            <person name="Ichihara T."/>
            <person name="Shiohata N."/>
            <person name="Sano S."/>
            <person name="Moriya S."/>
            <person name="Momiyama H."/>
            <person name="Satoh N."/>
            <person name="Takami S."/>
            <person name="Terashima Y."/>
            <person name="Suzuki O."/>
            <person name="Nakagawa S."/>
            <person name="Senoh A."/>
            <person name="Mizoguchi H."/>
            <person name="Goto Y."/>
            <person name="Shimizu F."/>
            <person name="Wakebe H."/>
            <person name="Hishigaki H."/>
            <person name="Watanabe T."/>
            <person name="Sugiyama A."/>
            <person name="Takemoto M."/>
            <person name="Kawakami B."/>
            <person name="Yamazaki M."/>
            <person name="Watanabe K."/>
            <person name="Kumagai A."/>
            <person name="Itakura S."/>
            <person name="Fukuzumi Y."/>
            <person name="Fujimori Y."/>
            <person name="Komiyama M."/>
            <person name="Tashiro H."/>
            <person name="Tanigami A."/>
            <person name="Fujiwara T."/>
            <person name="Ono T."/>
            <person name="Yamada K."/>
            <person name="Fujii Y."/>
            <person name="Ozaki K."/>
            <person name="Hirao M."/>
            <person name="Ohmori Y."/>
            <person name="Kawabata A."/>
            <person name="Hikiji T."/>
            <person name="Kobatake N."/>
            <person name="Inagaki H."/>
            <person name="Ikema Y."/>
            <person name="Okamoto S."/>
            <person name="Okitani R."/>
            <person name="Kawakami T."/>
            <person name="Noguchi S."/>
            <person name="Itoh T."/>
            <person name="Shigeta K."/>
            <person name="Senba T."/>
            <person name="Matsumura K."/>
            <person name="Nakajima Y."/>
            <person name="Mizuno T."/>
            <person name="Morinaga M."/>
            <person name="Sasaki M."/>
            <person name="Togashi T."/>
            <person name="Oyama M."/>
            <person name="Hata H."/>
            <person name="Watanabe M."/>
            <person name="Komatsu T."/>
            <person name="Mizushima-Sugano J."/>
            <person name="Satoh T."/>
            <person name="Shirai Y."/>
            <person name="Takahashi Y."/>
            <person name="Nakagawa K."/>
            <person name="Okumura K."/>
            <person name="Nagase T."/>
            <person name="Nomura N."/>
            <person name="Kikuchi H."/>
            <person name="Masuho Y."/>
            <person name="Yamashita R."/>
            <person name="Nakai K."/>
            <person name="Yada T."/>
            <person name="Nakamura Y."/>
            <person name="Ohara O."/>
            <person name="Isogai T."/>
            <person name="Sugano S."/>
        </authorList>
    </citation>
    <scope>NUCLEOTIDE SEQUENCE [LARGE SCALE MRNA]</scope>
</reference>
<reference key="3">
    <citation type="submission" date="2005-07" db="EMBL/GenBank/DDBJ databases">
        <authorList>
            <person name="Mural R.J."/>
            <person name="Istrail S."/>
            <person name="Sutton G.G."/>
            <person name="Florea L."/>
            <person name="Halpern A.L."/>
            <person name="Mobarry C.M."/>
            <person name="Lippert R."/>
            <person name="Walenz B."/>
            <person name="Shatkay H."/>
            <person name="Dew I."/>
            <person name="Miller J.R."/>
            <person name="Flanigan M.J."/>
            <person name="Edwards N.J."/>
            <person name="Bolanos R."/>
            <person name="Fasulo D."/>
            <person name="Halldorsson B.V."/>
            <person name="Hannenhalli S."/>
            <person name="Turner R."/>
            <person name="Yooseph S."/>
            <person name="Lu F."/>
            <person name="Nusskern D.R."/>
            <person name="Shue B.C."/>
            <person name="Zheng X.H."/>
            <person name="Zhong F."/>
            <person name="Delcher A.L."/>
            <person name="Huson D.H."/>
            <person name="Kravitz S.A."/>
            <person name="Mouchard L."/>
            <person name="Reinert K."/>
            <person name="Remington K.A."/>
            <person name="Clark A.G."/>
            <person name="Waterman M.S."/>
            <person name="Eichler E.E."/>
            <person name="Adams M.D."/>
            <person name="Hunkapiller M.W."/>
            <person name="Myers E.W."/>
            <person name="Venter J.C."/>
        </authorList>
    </citation>
    <scope>NUCLEOTIDE SEQUENCE [LARGE SCALE GENOMIC DNA]</scope>
</reference>
<reference evidence="17" key="4">
    <citation type="journal article" date="2004" name="Genome Res.">
        <title>The status, quality, and expansion of the NIH full-length cDNA project: the Mammalian Gene Collection (MGC).</title>
        <authorList>
            <consortium name="The MGC Project Team"/>
        </authorList>
    </citation>
    <scope>NUCLEOTIDE SEQUENCE [LARGE SCALE MRNA]</scope>
    <source>
        <tissue evidence="17">Lung</tissue>
        <tissue evidence="18">Pancreas</tissue>
    </source>
</reference>
<reference evidence="15" key="5">
    <citation type="journal article" date="1999" name="Proc. Natl. Acad. Sci. U.S.A.">
        <title>RING fingers mediate ubiquitin-conjugating enzyme (E2)-dependent ubiquitination.</title>
        <authorList>
            <person name="Lorick K.L."/>
            <person name="Jensen J.P."/>
            <person name="Fang S."/>
            <person name="Ong A.M."/>
            <person name="Hatakeyama S."/>
            <person name="Weissman A.M."/>
        </authorList>
    </citation>
    <scope>FUNCTION</scope>
</reference>
<reference evidence="15" key="6">
    <citation type="journal article" date="2002" name="Oncogene">
        <title>The TRC8 hereditary kidney cancer gene suppresses growth and functions with VHL in a common pathway.</title>
        <authorList>
            <person name="Gemmill R.M."/>
            <person name="Bemis L.T."/>
            <person name="Lee J.P."/>
            <person name="Sozen M.A."/>
            <person name="Baron A."/>
            <person name="Zeng C."/>
            <person name="Erickson P.F."/>
            <person name="Hooper J.E."/>
            <person name="Drabkin H.A."/>
        </authorList>
    </citation>
    <scope>FUNCTION</scope>
    <scope>INTERACTION WITH VHL</scope>
    <scope>SUBCELLULAR LOCATION</scope>
</reference>
<reference key="7">
    <citation type="journal article" date="2006" name="Cell">
        <title>Global, in vivo, and site-specific phosphorylation dynamics in signaling networks.</title>
        <authorList>
            <person name="Olsen J.V."/>
            <person name="Blagoev B."/>
            <person name="Gnad F."/>
            <person name="Macek B."/>
            <person name="Kumar C."/>
            <person name="Mortensen P."/>
            <person name="Mann M."/>
        </authorList>
    </citation>
    <scope>PHOSPHORYLATION [LARGE SCALE ANALYSIS] AT THR-663</scope>
    <scope>IDENTIFICATION BY MASS SPECTROMETRY [LARGE SCALE ANALYSIS]</scope>
    <source>
        <tissue>Cervix carcinoma</tissue>
    </source>
</reference>
<reference key="8">
    <citation type="journal article" date="2007" name="Oncogene">
        <title>RING-dependent tumor suppression and G2/M arrest induced by the TRC8 hereditary kidney cancer gene.</title>
        <authorList>
            <person name="Brauweiler A."/>
            <person name="Lorick K.L."/>
            <person name="Lee J.P."/>
            <person name="Tsai Y.C."/>
            <person name="Chan D."/>
            <person name="Weissman A.M."/>
            <person name="Drabkin H.A."/>
            <person name="Gemmill R.M."/>
        </authorList>
    </citation>
    <scope>FUNCTION</scope>
    <scope>CATALYTIC ACTIVITY</scope>
    <scope>MUTAGENESIS OF 547-CYS--CYS-550; 547-CYS--HIS-586; 557-SER--ARG-559; 572-LEU--LYS-574 AND 582-CYS--CYS-585</scope>
</reference>
<reference key="9">
    <citation type="journal article" date="2008" name="Mol. Cell">
        <title>Kinase-selective enrichment enables quantitative phosphoproteomics of the kinome across the cell cycle.</title>
        <authorList>
            <person name="Daub H."/>
            <person name="Olsen J.V."/>
            <person name="Bairlein M."/>
            <person name="Gnad F."/>
            <person name="Oppermann F.S."/>
            <person name="Korner R."/>
            <person name="Greff Z."/>
            <person name="Keri G."/>
            <person name="Stemmann O."/>
            <person name="Mann M."/>
        </authorList>
    </citation>
    <scope>PHOSPHORYLATION [LARGE SCALE ANALYSIS] AT THR-663</scope>
    <scope>IDENTIFICATION BY MASS SPECTROMETRY [LARGE SCALE ANALYSIS]</scope>
    <source>
        <tissue>Cervix carcinoma</tissue>
    </source>
</reference>
<reference key="10">
    <citation type="journal article" date="2008" name="Proc. Natl. Acad. Sci. U.S.A.">
        <title>A quantitative atlas of mitotic phosphorylation.</title>
        <authorList>
            <person name="Dephoure N."/>
            <person name="Zhou C."/>
            <person name="Villen J."/>
            <person name="Beausoleil S.A."/>
            <person name="Bakalarski C.E."/>
            <person name="Elledge S.J."/>
            <person name="Gygi S.P."/>
        </authorList>
    </citation>
    <scope>PHOSPHORYLATION [LARGE SCALE ANALYSIS] AT THR-663</scope>
    <scope>IDENTIFICATION BY MASS SPECTROMETRY [LARGE SCALE ANALYSIS]</scope>
    <source>
        <tissue>Cervix carcinoma</tissue>
    </source>
</reference>
<reference key="11">
    <citation type="journal article" date="2009" name="Anal. Chem.">
        <title>Lys-N and trypsin cover complementary parts of the phosphoproteome in a refined SCX-based approach.</title>
        <authorList>
            <person name="Gauci S."/>
            <person name="Helbig A.O."/>
            <person name="Slijper M."/>
            <person name="Krijgsveld J."/>
            <person name="Heck A.J."/>
            <person name="Mohammed S."/>
        </authorList>
    </citation>
    <scope>IDENTIFICATION BY MASS SPECTROMETRY [LARGE SCALE ANALYSIS]</scope>
</reference>
<reference key="12">
    <citation type="journal article" date="2009" name="J. Biol. Chem.">
        <title>The sterol-sensing endoplasmic reticulum (ER) membrane protein TRC8 hampers ER to Golgi transport of sterol regulatory element-binding protein-2 (SREBP-2)/SREBP cleavage-activated protein and reduces SREBP-2 cleavage.</title>
        <authorList>
            <person name="Irisawa M."/>
            <person name="Inoue J."/>
            <person name="Ozawa N."/>
            <person name="Mori K."/>
            <person name="Sato R."/>
        </authorList>
    </citation>
    <scope>FUNCTION</scope>
    <scope>INTERACTION WITH SREBF2; SCAP AND SEC24B</scope>
    <scope>UBIQUITINATION</scope>
    <scope>MUTAGENESIS OF 547-CYS--CYS-550 AND 547-CYS--HIS-586</scope>
</reference>
<reference key="13">
    <citation type="journal article" date="2009" name="J. Cell Biol.">
        <title>The TRC8 E3 ligase ubiquitinates MHC class I molecules before dislocation from the ER.</title>
        <authorList>
            <person name="Stagg H.R."/>
            <person name="Thomas M."/>
            <person name="van den Boomen D."/>
            <person name="Wiertz E.J."/>
            <person name="Drabkin H.A."/>
            <person name="Gemmill R.M."/>
            <person name="Lehner P.J."/>
        </authorList>
    </citation>
    <scope>FUNCTION</scope>
    <scope>INTERACTION WITH MHC CLASS I AND HM13</scope>
    <scope>MUTAGENESIS OF 547-CYS--CYS-550 AND 547-CYS--HIS-586</scope>
</reference>
<reference key="14">
    <citation type="journal article" date="2009" name="Sci. Signal.">
        <title>Quantitative phosphoproteomic analysis of T cell receptor signaling reveals system-wide modulation of protein-protein interactions.</title>
        <authorList>
            <person name="Mayya V."/>
            <person name="Lundgren D.H."/>
            <person name="Hwang S.-I."/>
            <person name="Rezaul K."/>
            <person name="Wu L."/>
            <person name="Eng J.K."/>
            <person name="Rodionov V."/>
            <person name="Han D.K."/>
        </authorList>
    </citation>
    <scope>PHOSPHORYLATION [LARGE SCALE ANALYSIS] AT THR-663</scope>
    <scope>IDENTIFICATION BY MASS SPECTROMETRY [LARGE SCALE ANALYSIS]</scope>
    <source>
        <tissue>Leukemic T-cell</tissue>
    </source>
</reference>
<reference key="15">
    <citation type="journal article" date="2010" name="Mol. Cancer Res.">
        <title>The TRC8 ubiquitin ligase is sterol regulated and interacts with lipid and protein biosynthetic pathways.</title>
        <authorList>
            <person name="Lee J.P."/>
            <person name="Brauweiler A."/>
            <person name="Rudolph M."/>
            <person name="Hooper J.E."/>
            <person name="Drabkin H.A."/>
            <person name="Gemmill R.M."/>
        </authorList>
    </citation>
    <scope>FUNCTION</scope>
    <scope>INTERACTION WITH INSIG1; INSIG2; EIF3F AND EIF3H</scope>
    <scope>INDUCTION</scope>
    <scope>MUTAGENESIS OF 547-CYS--CYS-550 AND 547-CYS--HIS-586</scope>
</reference>
<reference key="16">
    <citation type="journal article" date="2010" name="Sci. Signal.">
        <title>Quantitative phosphoproteomics reveals widespread full phosphorylation site occupancy during mitosis.</title>
        <authorList>
            <person name="Olsen J.V."/>
            <person name="Vermeulen M."/>
            <person name="Santamaria A."/>
            <person name="Kumar C."/>
            <person name="Miller M.L."/>
            <person name="Jensen L.J."/>
            <person name="Gnad F."/>
            <person name="Cox J."/>
            <person name="Jensen T.S."/>
            <person name="Nigg E.A."/>
            <person name="Brunak S."/>
            <person name="Mann M."/>
        </authorList>
    </citation>
    <scope>PHOSPHORYLATION [LARGE SCALE ANALYSIS] AT THR-663</scope>
    <scope>IDENTIFICATION BY MASS SPECTROMETRY [LARGE SCALE ANALYSIS]</scope>
    <source>
        <tissue>Cervix carcinoma</tissue>
    </source>
</reference>
<reference key="17">
    <citation type="journal article" date="2011" name="Proc. Natl. Acad. Sci. U.S.A.">
        <title>Sterol-induced degradation of HMG CoA reductase depends on interplay of two Insigs and two ubiquitin ligases, gp78 and Trc8.</title>
        <authorList>
            <person name="Jo Y."/>
            <person name="Lee P.C."/>
            <person name="Sguigna P.V."/>
            <person name="DeBose-Boyd R.A."/>
        </authorList>
    </citation>
    <scope>FUNCTION</scope>
    <scope>INTERACTION WITH INSIG1 AND INSIG2</scope>
</reference>
<reference key="18">
    <citation type="journal article" date="2011" name="Sci. Signal.">
        <title>System-wide temporal characterization of the proteome and phosphoproteome of human embryonic stem cell differentiation.</title>
        <authorList>
            <person name="Rigbolt K.T."/>
            <person name="Prokhorova T.A."/>
            <person name="Akimov V."/>
            <person name="Henningsen J."/>
            <person name="Johansen P.T."/>
            <person name="Kratchmarova I."/>
            <person name="Kassem M."/>
            <person name="Mann M."/>
            <person name="Olsen J.V."/>
            <person name="Blagoev B."/>
        </authorList>
    </citation>
    <scope>PHOSPHORYLATION [LARGE SCALE ANALYSIS] AT THR-663</scope>
    <scope>IDENTIFICATION BY MASS SPECTROMETRY [LARGE SCALE ANALYSIS]</scope>
</reference>
<reference key="19">
    <citation type="journal article" date="2012" name="Proc. Natl. Acad. Sci. U.S.A.">
        <title>N-terminal acetylome analyses and functional insights of the N-terminal acetyltransferase NatB.</title>
        <authorList>
            <person name="Van Damme P."/>
            <person name="Lasa M."/>
            <person name="Polevoda B."/>
            <person name="Gazquez C."/>
            <person name="Elosegui-Artola A."/>
            <person name="Kim D.S."/>
            <person name="De Juan-Pardo E."/>
            <person name="Demeyer K."/>
            <person name="Hole K."/>
            <person name="Larrea E."/>
            <person name="Timmerman E."/>
            <person name="Prieto J."/>
            <person name="Arnesen T."/>
            <person name="Sherman F."/>
            <person name="Gevaert K."/>
            <person name="Aldabe R."/>
        </authorList>
    </citation>
    <scope>ACETYLATION [LARGE SCALE ANALYSIS] AT ALA-2</scope>
    <scope>CLEAVAGE OF INITIATOR METHIONINE [LARGE SCALE ANALYSIS]</scope>
    <scope>IDENTIFICATION BY MASS SPECTROMETRY [LARGE SCALE ANALYSIS]</scope>
</reference>
<reference key="20">
    <citation type="journal article" date="2013" name="J. Proteome Res.">
        <title>Toward a comprehensive characterization of a human cancer cell phosphoproteome.</title>
        <authorList>
            <person name="Zhou H."/>
            <person name="Di Palma S."/>
            <person name="Preisinger C."/>
            <person name="Peng M."/>
            <person name="Polat A.N."/>
            <person name="Heck A.J."/>
            <person name="Mohammed S."/>
        </authorList>
    </citation>
    <scope>PHOSPHORYLATION [LARGE SCALE ANALYSIS] AT THR-663</scope>
    <scope>IDENTIFICATION BY MASS SPECTROMETRY [LARGE SCALE ANALYSIS]</scope>
    <source>
        <tissue>Erythroleukemia</tissue>
    </source>
</reference>
<reference key="21">
    <citation type="journal article" date="2013" name="Mol. Biol. Cell">
        <title>Ancient ubiquitous protein-1 mediates sterol-induced ubiquitination of 3-hydroxy-3-methylglutaryl CoA reductase in lipid droplet-associated endoplasmic reticulum membranes.</title>
        <authorList>
            <person name="Jo Y."/>
            <person name="Hartman I.Z."/>
            <person name="DeBose-Boyd R.A."/>
        </authorList>
    </citation>
    <scope>FUNCTION</scope>
    <scope>INTERACTION WITH AUP1; AMFR AND UBE2G2</scope>
</reference>
<reference key="22">
    <citation type="journal article" date="2014" name="EMBO J.">
        <title>Signal peptide peptidase functions in ERAD to cleave the unfolded protein response regulator XBP1u.</title>
        <authorList>
            <person name="Chen C.Y."/>
            <person name="Malchus N.S."/>
            <person name="Hehn B."/>
            <person name="Stelzer W."/>
            <person name="Avci D."/>
            <person name="Langosch D."/>
            <person name="Lemberg M.K."/>
        </authorList>
    </citation>
    <scope>INTERACTION WITH HM13 AND XBP1</scope>
</reference>
<reference key="23">
    <citation type="journal article" date="2014" name="J. Proteomics">
        <title>An enzyme assisted RP-RPLC approach for in-depth analysis of human liver phosphoproteome.</title>
        <authorList>
            <person name="Bian Y."/>
            <person name="Song C."/>
            <person name="Cheng K."/>
            <person name="Dong M."/>
            <person name="Wang F."/>
            <person name="Huang J."/>
            <person name="Sun D."/>
            <person name="Wang L."/>
            <person name="Ye M."/>
            <person name="Zou H."/>
        </authorList>
    </citation>
    <scope>PHOSPHORYLATION [LARGE SCALE ANALYSIS] AT SER-634 AND THR-635</scope>
    <scope>IDENTIFICATION BY MASS SPECTROMETRY [LARGE SCALE ANALYSIS]</scope>
    <source>
        <tissue>Liver</tissue>
    </source>
</reference>
<evidence type="ECO:0000255" key="1"/>
<evidence type="ECO:0000255" key="2">
    <source>
        <dbReference type="PROSITE-ProRule" id="PRU00175"/>
    </source>
</evidence>
<evidence type="ECO:0000256" key="3">
    <source>
        <dbReference type="SAM" id="MobiDB-lite"/>
    </source>
</evidence>
<evidence type="ECO:0000269" key="4">
    <source>
    </source>
</evidence>
<evidence type="ECO:0000269" key="5">
    <source>
    </source>
</evidence>
<evidence type="ECO:0000269" key="6">
    <source>
    </source>
</evidence>
<evidence type="ECO:0000269" key="7">
    <source>
    </source>
</evidence>
<evidence type="ECO:0000269" key="8">
    <source>
    </source>
</evidence>
<evidence type="ECO:0000269" key="9">
    <source>
    </source>
</evidence>
<evidence type="ECO:0000269" key="10">
    <source>
    </source>
</evidence>
<evidence type="ECO:0000269" key="11">
    <source>
    </source>
</evidence>
<evidence type="ECO:0000269" key="12">
    <source>
    </source>
</evidence>
<evidence type="ECO:0000269" key="13">
    <source>
    </source>
</evidence>
<evidence type="ECO:0000303" key="14">
    <source>
    </source>
</evidence>
<evidence type="ECO:0000305" key="15"/>
<evidence type="ECO:0000312" key="16">
    <source>
        <dbReference type="EMBL" id="AAC39930.1"/>
    </source>
</evidence>
<evidence type="ECO:0000312" key="17">
    <source>
        <dbReference type="EMBL" id="AAH21571.1"/>
    </source>
</evidence>
<evidence type="ECO:0000312" key="18">
    <source>
        <dbReference type="EMBL" id="AAH64636.1"/>
    </source>
</evidence>
<evidence type="ECO:0000312" key="19">
    <source>
        <dbReference type="HGNC" id="HGNC:17023"/>
    </source>
</evidence>
<evidence type="ECO:0007744" key="20">
    <source>
    </source>
</evidence>
<evidence type="ECO:0007744" key="21">
    <source>
    </source>
</evidence>
<evidence type="ECO:0007744" key="22">
    <source>
    </source>
</evidence>
<evidence type="ECO:0007744" key="23">
    <source>
    </source>
</evidence>
<evidence type="ECO:0007744" key="24">
    <source>
    </source>
</evidence>
<evidence type="ECO:0007744" key="25">
    <source>
    </source>
</evidence>
<evidence type="ECO:0007744" key="26">
    <source>
    </source>
</evidence>
<evidence type="ECO:0007744" key="27">
    <source>
    </source>
</evidence>
<evidence type="ECO:0007744" key="28">
    <source>
    </source>
</evidence>
<keyword id="KW-0007">Acetylation</keyword>
<keyword id="KW-0160">Chromosomal rearrangement</keyword>
<keyword id="KW-0256">Endoplasmic reticulum</keyword>
<keyword id="KW-0472">Membrane</keyword>
<keyword id="KW-0479">Metal-binding</keyword>
<keyword id="KW-0597">Phosphoprotein</keyword>
<keyword id="KW-1267">Proteomics identification</keyword>
<keyword id="KW-0675">Receptor</keyword>
<keyword id="KW-1185">Reference proteome</keyword>
<keyword id="KW-0808">Transferase</keyword>
<keyword id="KW-0812">Transmembrane</keyword>
<keyword id="KW-1133">Transmembrane helix</keyword>
<keyword id="KW-0832">Ubl conjugation</keyword>
<keyword id="KW-0833">Ubl conjugation pathway</keyword>
<keyword id="KW-0862">Zinc</keyword>
<keyword id="KW-0863">Zinc-finger</keyword>
<comment type="function">
    <text evidence="4 5 6 7 8 9 10 11">E3-ubiquitin ligase; acts as a negative regulator of cell proliferation through mechanisms involving G2/M arrest and cell death (PubMed:10500182, PubMed:12032852, PubMed:17016439). Required for MHC class I ubiquitination in cells expressing the cytomegalovirus protein US2 before dislocation from the endoplasmic reticulum (ER) (PubMed:19720873). Affects SREBP processing by hindering the SREBP-SCAP complex translocation from the ER to the Golgi, thereby reducing SREBF2 target gene expression (PubMed:19706601, PubMed:20068067). Involved in the sterol-accelerated degradation of HMGCR (PubMed:22143767, PubMed:23223569). This is achieved through binding of RNF139 to INSIG1 and/or INSIG2 at the ER membrane (PubMed:22143767). In addition, interaction of RNF139 with AUP1 facilitates interaction of RNF139 with ubiquitin-conjugating enzyme UBE2G2 and ubiquitin ligase AMFR, leading to ubiquitination of HMGCR (PubMed:23223569). The ubiquitinated HMGCR is then released from the ER into the cytosol for subsequent destruction (PubMed:22143767, PubMed:23223569). Required for INSIG1 ubiquitination (PubMed:20068067). May be required for EIF3 complex ubiquitination (PubMed:20068067).</text>
</comment>
<comment type="catalytic activity">
    <reaction evidence="6">
        <text>S-ubiquitinyl-[E2 ubiquitin-conjugating enzyme]-L-cysteine + [acceptor protein]-L-lysine = [E2 ubiquitin-conjugating enzyme]-L-cysteine + N(6)-ubiquitinyl-[acceptor protein]-L-lysine.</text>
        <dbReference type="EC" id="2.3.2.27"/>
    </reaction>
</comment>
<comment type="pathway">
    <text evidence="6 10">Protein modification; protein ubiquitination.</text>
</comment>
<comment type="subunit">
    <text evidence="5 7 8 9 10 11 12">Interacts with MHC class I and HM13 (PubMed:19720873, PubMed:25239945). Interacts with VHL (PubMed:12032852). Component of SCAP-SREBP complex composed of SREBF2, SCAP and RNF139; the complex hampers the interaction between SCAP and SEC24B, thereby reducing SREBF2 proteolytic processing (PubMed:19706601). Interacts with SREBF2 (via C-terminal domain) (PubMed:19706601). Interacts with SCAP; the interaction inhibits the interaction of SCAP with SEC24B and hampering the ER to Golgi transport of the SCAP-SREBP complex (PubMed:19706601). Interacts with SEC24B (PubMed:19706601). Interacts with INSIG1 and INSIG2 (PubMed:20068067, PubMed:22143767). Interacts with EIF3F and EIF3H; the interaction leads to protein translation inhibitions in a ubiquitination-dependent manner (PubMed:20068067). Interacts with XBP1 isoform 1; the interaction induces ubiquitination and degradation of XBP1 isoform 1 (PubMed:25239945). Interacts with AUP1, AMFR and UBE2G2; interaction with AUP1 facilitates interaction of RNF139 with ubiquitin-conjugating enzyme UBE2G2 and ubiquitin ligase AMFR/gp78, leading to sterol-induced ubiquitination of HMGCR and its subsequent proteasomal degradation (PubMed:23223569).</text>
</comment>
<comment type="interaction">
    <interactant intactId="EBI-1551681">
        <id>Q8WU17</id>
    </interactant>
    <interactant intactId="EBI-930964">
        <id>P54253</id>
        <label>ATXN1</label>
    </interactant>
    <organismsDiffer>false</organismsDiffer>
    <experiments>6</experiments>
</comment>
<comment type="interaction">
    <interactant intactId="EBI-1551681">
        <id>Q8WU17</id>
    </interactant>
    <interactant intactId="EBI-347472">
        <id>Q8TCT9</id>
        <label>HM13</label>
    </interactant>
    <organismsDiffer>false</organismsDiffer>
    <experiments>2</experiments>
</comment>
<comment type="interaction">
    <interactant intactId="EBI-1551681">
        <id>Q8WU17</id>
    </interactant>
    <interactant intactId="EBI-301246">
        <id>P40337</id>
        <label>VHL</label>
    </interactant>
    <organismsDiffer>false</organismsDiffer>
    <experiments>2</experiments>
</comment>
<comment type="subcellular location">
    <subcellularLocation>
        <location evidence="5">Endoplasmic reticulum membrane</location>
        <topology evidence="5">Multi-pass membrane protein</topology>
    </subcellularLocation>
</comment>
<comment type="tissue specificity">
    <text evidence="13">Highly expressed in testis, placenta and adrenal gland. Moderate expression in heart, brain, liver, skeletal muscle and pancreas, and low expression in lung and kidney.</text>
</comment>
<comment type="induction">
    <text evidence="9">Down-regulated by sterols (at protein level).</text>
</comment>
<comment type="domain">
    <text>The RING-type zinc finger domain mediates ubiquitin ligase activity.</text>
</comment>
<comment type="PTM">
    <text evidence="7">Autoubiquitinated. Ubiquitination is induced by sterol and leads to ist degradation via the ubiquitin-proteasome pathway.</text>
</comment>
<comment type="disease">
    <disease id="DI-02254">
        <name>Renal cell carcinoma</name>
        <acronym>RCC</acronym>
        <description>Renal cell carcinoma is a heterogeneous group of sporadic or hereditary carcinoma derived from cells of the proximal renal tubular epithelium. It is subclassified into clear cell renal carcinoma (non-papillary carcinoma), papillary renal cell carcinoma, chromophobe renal cell carcinoma, collecting duct carcinoma with medullary carcinoma of the kidney, and unclassified renal cell carcinoma. Clear cell renal cell carcinoma is the most common subtype.</description>
        <dbReference type="MIM" id="144700"/>
    </disease>
    <text>The disease may be caused by variants affecting the gene represented in this entry. A chromosomal aberration involving RNF139 has been found in a lymphoblastoid cell line established from a family with renal cell carcinoma and thyroid carcinoma. Translocation (3;8)(q14.2;q24.1) with FHIT. RNF139 is found to be fused to FHIT and disrupted within the sterol-sensing domain. In contrast, the FHIT coding region is maintained and expressed. Sporadic cases of renal carcinoma, where an acquired mutation in RNF139 results in the duplication of 12 nucleotides in the 5'-UTR, has also been identified.</text>
</comment>
<comment type="online information" name="Atlas of Genetics and Cytogenetics in Oncology and Haematology">
    <link uri="https://atlasgeneticsoncology.org/gene/500/TRC8"/>
</comment>
<accession>Q8WU17</accession>
<accession>B3KMD5</accession>
<accession>O75485</accession>
<accession>Q7LDL3</accession>
<sequence length="664" mass="75994">MAAVGPPQQQVRMAHQQVWAALEVALRVPCLYIIDAIFNSYPDSSQSRFCIVLQIFLRLFGVFASSIVLILSQRSLFKFYTYSSAFLLAATSVLVNYYASLHIDFYGAYNTSAFGIELLPRKGPSLWMALIVLQLTFGIGYVTLLQIHSIYSQLIILDLLVPVIGLITELPLHIRETLLFTSSLILTLNTVFVLAVKLKWFYYSTRYVYLLVRHMYRIYGLQLLMEDTWKRIRFPDILRVFWLTRVTAQATVLMYILRMANETDSFFISWDDFWDLICNLIISGCDSTLTVLGMSAVISSVAHYLGLGILAFIGSTEEDDRRLGFVAPVLFFILALQTGLSGLRPEERLIRLSRNMCLLLTAVLHFIHGMTDPVLMSLSASHVSSFRRHFPVLFVSACLFILPVLLSYVLWHHYALNTWLFAVTAFCVELCLKVIVSLTVYTLFMIDGYYNVLWEKLDDYVYYVRSTGSIIEFIFGVVMFGNGAYTMMFESGSKIRAFMMCLHAYFNIYLQAKNGWKTFMNRRTAVKKINSLPEIKGSRLQEINDVCAICYHEFTTSARITPCNHYFHALCLRKWLYIQDTCPMCHQKVYIEDDIKDNSNVSNNNGFIPPNETPEEAVREAAAESDRELNEDDSTDCDDDVQRERNGVIQHTGAAAEEFNDDTD</sequence>
<name>RN139_HUMAN</name>
<proteinExistence type="evidence at protein level"/>
<protein>
    <recommendedName>
        <fullName>E3 ubiquitin-protein ligase RNF139</fullName>
        <ecNumber evidence="6">2.3.2.27</ecNumber>
    </recommendedName>
    <alternativeName>
        <fullName>RING finger protein 139</fullName>
    </alternativeName>
    <alternativeName>
        <fullName evidence="15">RING-type E3 ubiquitin transferase RNF139</fullName>
    </alternativeName>
    <alternativeName>
        <fullName>Translocation in renal carcinoma on chromosome 8 protein</fullName>
    </alternativeName>
</protein>
<dbReference type="EC" id="2.3.2.27" evidence="6"/>
<dbReference type="EMBL" id="AF064800">
    <property type="protein sequence ID" value="AAC39931.1"/>
    <property type="molecule type" value="Genomic_DNA"/>
</dbReference>
<dbReference type="EMBL" id="AF064801">
    <property type="protein sequence ID" value="AAC39930.1"/>
    <property type="molecule type" value="mRNA"/>
</dbReference>
<dbReference type="EMBL" id="AK001602">
    <property type="protein sequence ID" value="BAG50947.1"/>
    <property type="molecule type" value="mRNA"/>
</dbReference>
<dbReference type="EMBL" id="CH471060">
    <property type="protein sequence ID" value="EAW92064.1"/>
    <property type="molecule type" value="Genomic_DNA"/>
</dbReference>
<dbReference type="EMBL" id="BC021571">
    <property type="protein sequence ID" value="AAH21571.1"/>
    <property type="molecule type" value="mRNA"/>
</dbReference>
<dbReference type="EMBL" id="BC064636">
    <property type="protein sequence ID" value="AAH64636.1"/>
    <property type="molecule type" value="mRNA"/>
</dbReference>
<dbReference type="CCDS" id="CCDS6350.1"/>
<dbReference type="RefSeq" id="NP_009149.2">
    <property type="nucleotide sequence ID" value="NM_007218.3"/>
</dbReference>
<dbReference type="SMR" id="Q8WU17"/>
<dbReference type="BioGRID" id="116401">
    <property type="interactions" value="45"/>
</dbReference>
<dbReference type="CORUM" id="Q8WU17"/>
<dbReference type="FunCoup" id="Q8WU17">
    <property type="interactions" value="3019"/>
</dbReference>
<dbReference type="IntAct" id="Q8WU17">
    <property type="interactions" value="12"/>
</dbReference>
<dbReference type="MINT" id="Q8WU17"/>
<dbReference type="STRING" id="9606.ENSP00000304051"/>
<dbReference type="iPTMnet" id="Q8WU17"/>
<dbReference type="PhosphoSitePlus" id="Q8WU17"/>
<dbReference type="BioMuta" id="RNF139"/>
<dbReference type="DMDM" id="74760542"/>
<dbReference type="jPOST" id="Q8WU17"/>
<dbReference type="MassIVE" id="Q8WU17"/>
<dbReference type="PaxDb" id="9606-ENSP00000304051"/>
<dbReference type="PeptideAtlas" id="Q8WU17"/>
<dbReference type="ProteomicsDB" id="74623"/>
<dbReference type="Antibodypedia" id="747">
    <property type="antibodies" value="178 antibodies from 27 providers"/>
</dbReference>
<dbReference type="DNASU" id="11236"/>
<dbReference type="Ensembl" id="ENST00000303545.4">
    <property type="protein sequence ID" value="ENSP00000304051.4"/>
    <property type="gene ID" value="ENSG00000170881.6"/>
</dbReference>
<dbReference type="Ensembl" id="ENST00000708475.1">
    <property type="protein sequence ID" value="ENSP00000517238.1"/>
    <property type="gene ID" value="ENSG00000291729.1"/>
</dbReference>
<dbReference type="Ensembl" id="ENST00000716592.1">
    <property type="protein sequence ID" value="ENSP00000520565.1"/>
    <property type="gene ID" value="ENSG00000170881.6"/>
</dbReference>
<dbReference type="GeneID" id="11236"/>
<dbReference type="KEGG" id="hsa:11236"/>
<dbReference type="MANE-Select" id="ENST00000303545.4">
    <property type="protein sequence ID" value="ENSP00000304051.4"/>
    <property type="RefSeq nucleotide sequence ID" value="NM_007218.4"/>
    <property type="RefSeq protein sequence ID" value="NP_009149.2"/>
</dbReference>
<dbReference type="UCSC" id="uc003yrc.4">
    <property type="organism name" value="human"/>
</dbReference>
<dbReference type="AGR" id="HGNC:17023"/>
<dbReference type="CTD" id="11236"/>
<dbReference type="DisGeNET" id="11236"/>
<dbReference type="GeneCards" id="RNF139"/>
<dbReference type="HGNC" id="HGNC:17023">
    <property type="gene designation" value="RNF139"/>
</dbReference>
<dbReference type="HPA" id="ENSG00000170881">
    <property type="expression patterns" value="Tissue enhanced (bone)"/>
</dbReference>
<dbReference type="MalaCards" id="RNF139"/>
<dbReference type="MIM" id="144700">
    <property type="type" value="phenotype"/>
</dbReference>
<dbReference type="MIM" id="603046">
    <property type="type" value="gene"/>
</dbReference>
<dbReference type="neXtProt" id="NX_Q8WU17"/>
<dbReference type="OpenTargets" id="ENSG00000170881"/>
<dbReference type="Orphanet" id="422526">
    <property type="disease" value="Hereditary clear cell renal cell carcinoma"/>
</dbReference>
<dbReference type="PharmGKB" id="PA134945850"/>
<dbReference type="VEuPathDB" id="HostDB:ENSG00000170881"/>
<dbReference type="eggNOG" id="KOG0802">
    <property type="taxonomic scope" value="Eukaryota"/>
</dbReference>
<dbReference type="GeneTree" id="ENSGT00940000158932"/>
<dbReference type="HOGENOM" id="CLU_016467_0_1_1"/>
<dbReference type="InParanoid" id="Q8WU17"/>
<dbReference type="OMA" id="NGAYTMV"/>
<dbReference type="OrthoDB" id="4348522at2759"/>
<dbReference type="PAN-GO" id="Q8WU17">
    <property type="GO annotations" value="4 GO annotations based on evolutionary models"/>
</dbReference>
<dbReference type="PhylomeDB" id="Q8WU17"/>
<dbReference type="TreeFam" id="TF318635"/>
<dbReference type="PathwayCommons" id="Q8WU17"/>
<dbReference type="Reactome" id="R-HSA-901032">
    <property type="pathway name" value="ER Quality Control Compartment (ERQC)"/>
</dbReference>
<dbReference type="SignaLink" id="Q8WU17"/>
<dbReference type="SIGNOR" id="Q8WU17"/>
<dbReference type="UniPathway" id="UPA00143"/>
<dbReference type="BioGRID-ORCS" id="11236">
    <property type="hits" value="29 hits in 1192 CRISPR screens"/>
</dbReference>
<dbReference type="ChiTaRS" id="RNF139">
    <property type="organism name" value="human"/>
</dbReference>
<dbReference type="GeneWiki" id="RNF139"/>
<dbReference type="GenomeRNAi" id="11236"/>
<dbReference type="Pharos" id="Q8WU17">
    <property type="development level" value="Tbio"/>
</dbReference>
<dbReference type="PRO" id="PR:Q8WU17"/>
<dbReference type="Proteomes" id="UP000005640">
    <property type="component" value="Chromosome 8"/>
</dbReference>
<dbReference type="RNAct" id="Q8WU17">
    <property type="molecule type" value="protein"/>
</dbReference>
<dbReference type="Bgee" id="ENSG00000170881">
    <property type="expression patterns" value="Expressed in sperm and 213 other cell types or tissues"/>
</dbReference>
<dbReference type="ExpressionAtlas" id="Q8WU17">
    <property type="expression patterns" value="baseline and differential"/>
</dbReference>
<dbReference type="GO" id="GO:0036513">
    <property type="term" value="C:Derlin-1 retrotranslocation complex"/>
    <property type="evidence" value="ECO:0000314"/>
    <property type="project" value="ParkinsonsUK-UCL"/>
</dbReference>
<dbReference type="GO" id="GO:0012505">
    <property type="term" value="C:endomembrane system"/>
    <property type="evidence" value="ECO:0000318"/>
    <property type="project" value="GO_Central"/>
</dbReference>
<dbReference type="GO" id="GO:0005783">
    <property type="term" value="C:endoplasmic reticulum"/>
    <property type="evidence" value="ECO:0000314"/>
    <property type="project" value="UniProtKB"/>
</dbReference>
<dbReference type="GO" id="GO:0005789">
    <property type="term" value="C:endoplasmic reticulum membrane"/>
    <property type="evidence" value="ECO:0000304"/>
    <property type="project" value="Reactome"/>
</dbReference>
<dbReference type="GO" id="GO:0044322">
    <property type="term" value="C:endoplasmic reticulum quality control compartment"/>
    <property type="evidence" value="ECO:0007669"/>
    <property type="project" value="GOC"/>
</dbReference>
<dbReference type="GO" id="GO:0016020">
    <property type="term" value="C:membrane"/>
    <property type="evidence" value="ECO:0000304"/>
    <property type="project" value="UniProtKB"/>
</dbReference>
<dbReference type="GO" id="GO:0002020">
    <property type="term" value="F:protease binding"/>
    <property type="evidence" value="ECO:0000353"/>
    <property type="project" value="UniProtKB"/>
</dbReference>
<dbReference type="GO" id="GO:0038023">
    <property type="term" value="F:signaling receptor activity"/>
    <property type="evidence" value="ECO:0000304"/>
    <property type="project" value="UniProtKB"/>
</dbReference>
<dbReference type="GO" id="GO:0061630">
    <property type="term" value="F:ubiquitin protein ligase activity"/>
    <property type="evidence" value="ECO:0000314"/>
    <property type="project" value="UniProtKB"/>
</dbReference>
<dbReference type="GO" id="GO:0019787">
    <property type="term" value="F:ubiquitin-like protein transferase activity"/>
    <property type="evidence" value="ECO:0000314"/>
    <property type="project" value="UniProtKB"/>
</dbReference>
<dbReference type="GO" id="GO:0004842">
    <property type="term" value="F:ubiquitin-protein transferase activity"/>
    <property type="evidence" value="ECO:0000314"/>
    <property type="project" value="UniProtKB"/>
</dbReference>
<dbReference type="GO" id="GO:0008270">
    <property type="term" value="F:zinc ion binding"/>
    <property type="evidence" value="ECO:0007669"/>
    <property type="project" value="UniProtKB-KW"/>
</dbReference>
<dbReference type="GO" id="GO:1904380">
    <property type="term" value="P:endoplasmic reticulum mannose trimming"/>
    <property type="evidence" value="ECO:0000304"/>
    <property type="project" value="Reactome"/>
</dbReference>
<dbReference type="GO" id="GO:0036503">
    <property type="term" value="P:ERAD pathway"/>
    <property type="evidence" value="ECO:0000315"/>
    <property type="project" value="ParkinsonsUK-UCL"/>
</dbReference>
<dbReference type="GO" id="GO:0008285">
    <property type="term" value="P:negative regulation of cell population proliferation"/>
    <property type="evidence" value="ECO:0000314"/>
    <property type="project" value="UniProtKB"/>
</dbReference>
<dbReference type="GO" id="GO:0017148">
    <property type="term" value="P:negative regulation of translation"/>
    <property type="evidence" value="ECO:0000314"/>
    <property type="project" value="UniProtKB"/>
</dbReference>
<dbReference type="GO" id="GO:2000060">
    <property type="term" value="P:positive regulation of ubiquitin-dependent protein catabolic process"/>
    <property type="evidence" value="ECO:0000315"/>
    <property type="project" value="UniProtKB"/>
</dbReference>
<dbReference type="GO" id="GO:0043161">
    <property type="term" value="P:proteasome-mediated ubiquitin-dependent protein catabolic process"/>
    <property type="evidence" value="ECO:0000318"/>
    <property type="project" value="GO_Central"/>
</dbReference>
<dbReference type="GO" id="GO:0031648">
    <property type="term" value="P:protein destabilization"/>
    <property type="evidence" value="ECO:0000315"/>
    <property type="project" value="UniProtKB"/>
</dbReference>
<dbReference type="GO" id="GO:0016567">
    <property type="term" value="P:protein ubiquitination"/>
    <property type="evidence" value="ECO:0000314"/>
    <property type="project" value="UniProtKB"/>
</dbReference>
<dbReference type="GO" id="GO:0060628">
    <property type="term" value="P:regulation of ER to Golgi vesicle-mediated transport"/>
    <property type="evidence" value="ECO:0000314"/>
    <property type="project" value="UniProtKB"/>
</dbReference>
<dbReference type="GO" id="GO:0070613">
    <property type="term" value="P:regulation of protein processing"/>
    <property type="evidence" value="ECO:0000314"/>
    <property type="project" value="UniProtKB"/>
</dbReference>
<dbReference type="CDD" id="cd16683">
    <property type="entry name" value="RING-H2_RNF139"/>
    <property type="match status" value="1"/>
</dbReference>
<dbReference type="FunFam" id="3.30.40.10:FF:000166">
    <property type="entry name" value="E3 ubiquitin-protein ligase RNF139"/>
    <property type="match status" value="1"/>
</dbReference>
<dbReference type="Gene3D" id="3.30.40.10">
    <property type="entry name" value="Zinc/RING finger domain, C3HC4 (zinc finger)"/>
    <property type="match status" value="1"/>
</dbReference>
<dbReference type="InterPro" id="IPR050731">
    <property type="entry name" value="HRD1_E3_ubiq-ligases"/>
</dbReference>
<dbReference type="InterPro" id="IPR025754">
    <property type="entry name" value="TRC8_N_dom"/>
</dbReference>
<dbReference type="InterPro" id="IPR001841">
    <property type="entry name" value="Znf_RING"/>
</dbReference>
<dbReference type="InterPro" id="IPR011016">
    <property type="entry name" value="Znf_RING-CH"/>
</dbReference>
<dbReference type="InterPro" id="IPR013083">
    <property type="entry name" value="Znf_RING/FYVE/PHD"/>
</dbReference>
<dbReference type="PANTHER" id="PTHR22763:SF163">
    <property type="entry name" value="E3 UBIQUITIN-PROTEIN LIGASE RNF139"/>
    <property type="match status" value="1"/>
</dbReference>
<dbReference type="PANTHER" id="PTHR22763">
    <property type="entry name" value="RING ZINC FINGER PROTEIN"/>
    <property type="match status" value="1"/>
</dbReference>
<dbReference type="Pfam" id="PF13705">
    <property type="entry name" value="TRC8_N"/>
    <property type="match status" value="1"/>
</dbReference>
<dbReference type="Pfam" id="PF13639">
    <property type="entry name" value="zf-RING_2"/>
    <property type="match status" value="1"/>
</dbReference>
<dbReference type="SMART" id="SM00184">
    <property type="entry name" value="RING"/>
    <property type="match status" value="1"/>
</dbReference>
<dbReference type="SMART" id="SM00744">
    <property type="entry name" value="RINGv"/>
    <property type="match status" value="1"/>
</dbReference>
<dbReference type="SUPFAM" id="SSF57850">
    <property type="entry name" value="RING/U-box"/>
    <property type="match status" value="1"/>
</dbReference>
<dbReference type="PROSITE" id="PS50089">
    <property type="entry name" value="ZF_RING_2"/>
    <property type="match status" value="1"/>
</dbReference>
<feature type="initiator methionine" description="Removed" evidence="26">
    <location>
        <position position="1"/>
    </location>
</feature>
<feature type="chain" id="PRO_0000056098" description="E3 ubiquitin-protein ligase RNF139">
    <location>
        <begin position="2"/>
        <end position="664"/>
    </location>
</feature>
<feature type="transmembrane region" description="Helical" evidence="1">
    <location>
        <begin position="51"/>
        <end position="71"/>
    </location>
</feature>
<feature type="transmembrane region" description="Helical" evidence="1">
    <location>
        <begin position="85"/>
        <end position="105"/>
    </location>
</feature>
<feature type="transmembrane region" description="Helical" evidence="1">
    <location>
        <begin position="125"/>
        <end position="145"/>
    </location>
</feature>
<feature type="transmembrane region" description="Helical" evidence="1">
    <location>
        <begin position="154"/>
        <end position="174"/>
    </location>
</feature>
<feature type="transmembrane region" description="Helical" evidence="1">
    <location>
        <begin position="178"/>
        <end position="198"/>
    </location>
</feature>
<feature type="transmembrane region" description="Helical" evidence="1">
    <location>
        <begin position="293"/>
        <end position="313"/>
    </location>
</feature>
<feature type="transmembrane region" description="Helical" evidence="1">
    <location>
        <begin position="323"/>
        <end position="343"/>
    </location>
</feature>
<feature type="transmembrane region" description="Helical" evidence="1">
    <location>
        <begin position="356"/>
        <end position="376"/>
    </location>
</feature>
<feature type="transmembrane region" description="Helical" evidence="1">
    <location>
        <begin position="390"/>
        <end position="410"/>
    </location>
</feature>
<feature type="transmembrane region" description="Helical" evidence="1">
    <location>
        <begin position="420"/>
        <end position="440"/>
    </location>
</feature>
<feature type="transmembrane region" description="Helical" evidence="1">
    <location>
        <begin position="469"/>
        <end position="489"/>
    </location>
</feature>
<feature type="transmembrane region" description="Helical" evidence="1">
    <location>
        <begin position="495"/>
        <end position="512"/>
    </location>
</feature>
<feature type="zinc finger region" description="RING-type; atypical" evidence="2">
    <location>
        <begin position="547"/>
        <end position="586"/>
    </location>
</feature>
<feature type="region of interest" description="Disordered" evidence="3">
    <location>
        <begin position="601"/>
        <end position="664"/>
    </location>
</feature>
<feature type="compositionally biased region" description="Basic and acidic residues" evidence="3">
    <location>
        <begin position="616"/>
        <end position="628"/>
    </location>
</feature>
<feature type="compositionally biased region" description="Acidic residues" evidence="3">
    <location>
        <begin position="629"/>
        <end position="639"/>
    </location>
</feature>
<feature type="modified residue" description="N-acetylalanine" evidence="26">
    <location>
        <position position="2"/>
    </location>
</feature>
<feature type="modified residue" description="Phosphoserine" evidence="28">
    <location>
        <position position="634"/>
    </location>
</feature>
<feature type="modified residue" description="Phosphothreonine" evidence="28">
    <location>
        <position position="635"/>
    </location>
</feature>
<feature type="modified residue" description="Phosphothreonine" evidence="20 21 22 23 24 25 27">
    <location>
        <position position="663"/>
    </location>
</feature>
<feature type="mutagenesis site" description="Increases proliferation. Rescues MHC class I to the cell surface. Fails to down-regulate SREBF1 and SREBF2." evidence="6 7 8 9">
    <location>
        <begin position="547"/>
        <end position="586"/>
    </location>
</feature>
<feature type="mutagenesis site" description="Abolishes ubiquitination activity. Increases proliferation. Does not phosphorylate CHEK2 on T-68. Does not phosphorylate ATM on S-1981. Rescues MHC class I to the cell surface. Suppresses SREBF2 processing in the presence or absence of sterols. Fails to down-regulate SREBF1 and SREBF2. Decreases INSIG1 ubiquitination." evidence="6 7 8 9">
    <original>CAIC</original>
    <variation>SAIS</variation>
    <location>
        <begin position="547"/>
        <end position="550"/>
    </location>
</feature>
<feature type="mutagenesis site" description="Retaines about 30% of ubiquitination activity." evidence="6">
    <original>SAR</original>
    <variation>AAA</variation>
    <location>
        <begin position="557"/>
        <end position="559"/>
    </location>
</feature>
<feature type="mutagenesis site" description="Abolishes ubiquitination activity. Increases proliferation." evidence="6">
    <original>LRK</original>
    <variation>AAA</variation>
    <location>
        <begin position="572"/>
        <end position="574"/>
    </location>
</feature>
<feature type="mutagenesis site" description="Abolishes ubiquitination activity. Increases proliferation." evidence="6">
    <original>CPMC</original>
    <variation>APMA</variation>
    <location>
        <begin position="582"/>
        <end position="585"/>
    </location>
</feature>
<feature type="sequence conflict" description="In Ref. 1; AAC39930/AAC39931." evidence="15" ref="1">
    <original>V</original>
    <variation>I</variation>
    <location>
        <position position="18"/>
    </location>
</feature>
<gene>
    <name evidence="19" type="primary">RNF139</name>
    <name evidence="14" type="synonym">TRC8</name>
</gene>